<sequence length="881" mass="97689">MRFSHFLKYNAVPEWQNHYMDYSELKNLIYTLQTDELQVGDNEEGFGAGKSSNITDRFKNKFSFKNAKEDTSSGMNKDAGIVEETIELRELPTAQTVAAKPSPFRRMKEKIFYKRRSSSASSVSSTANENLQLDTYDTFVGDLTAEKQKVDDFYKRTEAKFYDKFDALVKDLKKIGVIEYDIDDDTLFNEPIASTNDEVPPLDLDDDEDDDEFYDDQSNIEDNTALLHHSQYNIKSQKKSLLKKSIVNLYIDLCQLKSFIELNRIGFAKITKKSDKVLHLNTRTELIESEQFFKDTYAFQAETIELLNSKISQLVTFYARITDRPHNISHSKQELKSYLHDHIVWERSNTWKDMLGLLSQADELTPKETEYNANKLVGKLDLEYYRWPLPRPINLKFTSINNVALPKLFFTKKAYKIYFIILVTGLLLGIKTFNDAAQHRCMALVECVAFLWASEAIPLHITAFLVPLLVVLFKVLKTSDGAIMSAASASSEILAAMWSSTIMILLAGFTLGEVLAQYNIAKVLASWLLAFAGCKPRNVLLMAMCVVFFLSMWISNVAAPVLTYSLLSPLLDAMDADSPFAQALVLGVALAANIGGMSSPISSPQNIISMSYLKPYGIGWGQFFAVALPSGILAMLLVWILLFTTFKMNKTKLEKFKPIKTKFTVKQYYIITVTVATILLWCVESQIEGAFGSSGQIAIIPIVLFFGTGLLSTQDLNAFPWSIVILAMGGIALGKAVSSSGLLSTIAKALQKKIENDGVFAILCIFGILMLVVGTFVSHTVSAIIIIPLVQEVGDKLGNPKAAPILVFGCALLSSCGMGLASSGFPNVTAISKVDRKGDRYLSVMTFLTRGVPASILAFLCVITLGYGIMASVVKGNATSA</sequence>
<feature type="chain" id="PRO_0000172518" description="Low-affinity phosphate transporter PHO90">
    <location>
        <begin position="1"/>
        <end position="881"/>
    </location>
</feature>
<feature type="transmembrane region" description="Helical" evidence="1">
    <location>
        <begin position="417"/>
        <end position="437"/>
    </location>
</feature>
<feature type="transmembrane region" description="Helical" evidence="1">
    <location>
        <begin position="456"/>
        <end position="476"/>
    </location>
</feature>
<feature type="transmembrane region" description="Helical" evidence="1">
    <location>
        <begin position="493"/>
        <end position="513"/>
    </location>
</feature>
<feature type="transmembrane region" description="Helical" evidence="1">
    <location>
        <begin position="514"/>
        <end position="534"/>
    </location>
</feature>
<feature type="transmembrane region" description="Helical" evidence="1">
    <location>
        <begin position="539"/>
        <end position="559"/>
    </location>
</feature>
<feature type="transmembrane region" description="Helical" evidence="1">
    <location>
        <begin position="581"/>
        <end position="601"/>
    </location>
</feature>
<feature type="transmembrane region" description="Helical" evidence="1">
    <location>
        <begin position="663"/>
        <end position="683"/>
    </location>
</feature>
<feature type="transmembrane region" description="Helical" evidence="1">
    <location>
        <begin position="691"/>
        <end position="711"/>
    </location>
</feature>
<feature type="transmembrane region" description="Helical" evidence="1">
    <location>
        <begin position="718"/>
        <end position="738"/>
    </location>
</feature>
<feature type="transmembrane region" description="Helical" evidence="1">
    <location>
        <begin position="758"/>
        <end position="778"/>
    </location>
</feature>
<feature type="transmembrane region" description="Helical" evidence="1">
    <location>
        <begin position="805"/>
        <end position="825"/>
    </location>
</feature>
<feature type="transmembrane region" description="Helical" evidence="1">
    <location>
        <begin position="854"/>
        <end position="874"/>
    </location>
</feature>
<feature type="domain" description="SPX" evidence="2">
    <location>
        <begin position="1"/>
        <end position="288"/>
    </location>
</feature>
<feature type="strand" evidence="8">
    <location>
        <begin position="384"/>
        <end position="388"/>
    </location>
</feature>
<feature type="strand" evidence="8">
    <location>
        <begin position="402"/>
        <end position="406"/>
    </location>
</feature>
<feature type="helix" evidence="8">
    <location>
        <begin position="407"/>
        <end position="409"/>
    </location>
</feature>
<feature type="helix" evidence="8">
    <location>
        <begin position="412"/>
        <end position="429"/>
    </location>
</feature>
<feature type="strand" evidence="10">
    <location>
        <begin position="433"/>
        <end position="435"/>
    </location>
</feature>
<feature type="helix" evidence="8">
    <location>
        <begin position="436"/>
        <end position="454"/>
    </location>
</feature>
<feature type="helix" evidence="8">
    <location>
        <begin position="459"/>
        <end position="473"/>
    </location>
</feature>
<feature type="strand" evidence="8">
    <location>
        <begin position="479"/>
        <end position="483"/>
    </location>
</feature>
<feature type="helix" evidence="8">
    <location>
        <begin position="486"/>
        <end position="497"/>
    </location>
</feature>
<feature type="helix" evidence="8">
    <location>
        <begin position="500"/>
        <end position="517"/>
    </location>
</feature>
<feature type="helix" evidence="8">
    <location>
        <begin position="520"/>
        <end position="532"/>
    </location>
</feature>
<feature type="helix" evidence="8">
    <location>
        <begin position="536"/>
        <end position="554"/>
    </location>
</feature>
<feature type="turn" evidence="8">
    <location>
        <begin position="556"/>
        <end position="558"/>
    </location>
</feature>
<feature type="helix" evidence="8">
    <location>
        <begin position="559"/>
        <end position="566"/>
    </location>
</feature>
<feature type="helix" evidence="8">
    <location>
        <begin position="568"/>
        <end position="571"/>
    </location>
</feature>
<feature type="strand" evidence="10">
    <location>
        <begin position="572"/>
        <end position="574"/>
    </location>
</feature>
<feature type="helix" evidence="8">
    <location>
        <begin position="579"/>
        <end position="595"/>
    </location>
</feature>
<feature type="turn" evidence="9">
    <location>
        <begin position="596"/>
        <end position="598"/>
    </location>
</feature>
<feature type="helix" evidence="8">
    <location>
        <begin position="604"/>
        <end position="613"/>
    </location>
</feature>
<feature type="helix" evidence="8">
    <location>
        <begin position="614"/>
        <end position="616"/>
    </location>
</feature>
<feature type="helix" evidence="8">
    <location>
        <begin position="620"/>
        <end position="645"/>
    </location>
</feature>
<feature type="helix" evidence="8">
    <location>
        <begin position="665"/>
        <end position="682"/>
    </location>
</feature>
<feature type="helix" evidence="8">
    <location>
        <begin position="684"/>
        <end position="687"/>
    </location>
</feature>
<feature type="helix" evidence="8">
    <location>
        <begin position="688"/>
        <end position="691"/>
    </location>
</feature>
<feature type="helix" evidence="8">
    <location>
        <begin position="694"/>
        <end position="706"/>
    </location>
</feature>
<feature type="turn" evidence="8">
    <location>
        <begin position="707"/>
        <end position="709"/>
    </location>
</feature>
<feature type="helix" evidence="8">
    <location>
        <begin position="713"/>
        <end position="717"/>
    </location>
</feature>
<feature type="helix" evidence="8">
    <location>
        <begin position="721"/>
        <end position="740"/>
    </location>
</feature>
<feature type="helix" evidence="8">
    <location>
        <begin position="742"/>
        <end position="754"/>
    </location>
</feature>
<feature type="strand" evidence="8">
    <location>
        <begin position="755"/>
        <end position="757"/>
    </location>
</feature>
<feature type="helix" evidence="8">
    <location>
        <begin position="759"/>
        <end position="776"/>
    </location>
</feature>
<feature type="helix" evidence="8">
    <location>
        <begin position="779"/>
        <end position="796"/>
    </location>
</feature>
<feature type="helix" evidence="8">
    <location>
        <begin position="802"/>
        <end position="813"/>
    </location>
</feature>
<feature type="strand" evidence="10">
    <location>
        <begin position="821"/>
        <end position="824"/>
    </location>
</feature>
<feature type="helix" evidence="8">
    <location>
        <begin position="825"/>
        <end position="832"/>
    </location>
</feature>
<feature type="helix" evidence="8">
    <location>
        <begin position="844"/>
        <end position="873"/>
    </location>
</feature>
<name>PHO90_YEAST</name>
<evidence type="ECO:0000255" key="1"/>
<evidence type="ECO:0000255" key="2">
    <source>
        <dbReference type="PROSITE-ProRule" id="PRU00714"/>
    </source>
</evidence>
<evidence type="ECO:0000269" key="3">
    <source>
    </source>
</evidence>
<evidence type="ECO:0000269" key="4">
    <source>
    </source>
</evidence>
<evidence type="ECO:0000269" key="5">
    <source>
    </source>
</evidence>
<evidence type="ECO:0000269" key="6">
    <source>
    </source>
</evidence>
<evidence type="ECO:0000305" key="7"/>
<evidence type="ECO:0007829" key="8">
    <source>
        <dbReference type="PDB" id="8R33"/>
    </source>
</evidence>
<evidence type="ECO:0007829" key="9">
    <source>
        <dbReference type="PDB" id="8R34"/>
    </source>
</evidence>
<evidence type="ECO:0007829" key="10">
    <source>
        <dbReference type="PDB" id="8R35"/>
    </source>
</evidence>
<organism>
    <name type="scientific">Saccharomyces cerevisiae (strain ATCC 204508 / S288c)</name>
    <name type="common">Baker's yeast</name>
    <dbReference type="NCBI Taxonomy" id="559292"/>
    <lineage>
        <taxon>Eukaryota</taxon>
        <taxon>Fungi</taxon>
        <taxon>Dikarya</taxon>
        <taxon>Ascomycota</taxon>
        <taxon>Saccharomycotina</taxon>
        <taxon>Saccharomycetes</taxon>
        <taxon>Saccharomycetales</taxon>
        <taxon>Saccharomycetaceae</taxon>
        <taxon>Saccharomyces</taxon>
    </lineage>
</organism>
<keyword id="KW-0002">3D-structure</keyword>
<keyword id="KW-0472">Membrane</keyword>
<keyword id="KW-0592">Phosphate transport</keyword>
<keyword id="KW-1185">Reference proteome</keyword>
<keyword id="KW-0812">Transmembrane</keyword>
<keyword id="KW-1133">Transmembrane helix</keyword>
<keyword id="KW-0813">Transport</keyword>
<accession>P39535</accession>
<protein>
    <recommendedName>
        <fullName>Low-affinity phosphate transporter PHO90</fullName>
    </recommendedName>
</protein>
<dbReference type="EMBL" id="X77688">
    <property type="protein sequence ID" value="CAA54759.1"/>
    <property type="molecule type" value="Genomic_DNA"/>
</dbReference>
<dbReference type="EMBL" id="Z49473">
    <property type="protein sequence ID" value="CAA89493.1"/>
    <property type="molecule type" value="Genomic_DNA"/>
</dbReference>
<dbReference type="EMBL" id="BK006943">
    <property type="protein sequence ID" value="DAA08610.1"/>
    <property type="molecule type" value="Genomic_DNA"/>
</dbReference>
<dbReference type="PIR" id="S46633">
    <property type="entry name" value="S46633"/>
</dbReference>
<dbReference type="RefSeq" id="NP_012337.1">
    <property type="nucleotide sequence ID" value="NM_001181631.1"/>
</dbReference>
<dbReference type="PDB" id="8R33">
    <property type="method" value="EM"/>
    <property type="resolution" value="2.29 A"/>
    <property type="chains" value="A/B=1-881"/>
</dbReference>
<dbReference type="PDB" id="8R34">
    <property type="method" value="EM"/>
    <property type="resolution" value="2.62 A"/>
    <property type="chains" value="A/B=1-881"/>
</dbReference>
<dbReference type="PDB" id="8R35">
    <property type="method" value="EM"/>
    <property type="resolution" value="3.12 A"/>
    <property type="chains" value="A/B=1-881"/>
</dbReference>
<dbReference type="PDBsum" id="8R33"/>
<dbReference type="PDBsum" id="8R34"/>
<dbReference type="PDBsum" id="8R35"/>
<dbReference type="EMDB" id="EMD-18860"/>
<dbReference type="EMDB" id="EMD-18861"/>
<dbReference type="SMR" id="P39535"/>
<dbReference type="BioGRID" id="33566">
    <property type="interactions" value="114"/>
</dbReference>
<dbReference type="FunCoup" id="P39535">
    <property type="interactions" value="164"/>
</dbReference>
<dbReference type="IntAct" id="P39535">
    <property type="interactions" value="21"/>
</dbReference>
<dbReference type="MINT" id="P39535"/>
<dbReference type="STRING" id="4932.YJL198W"/>
<dbReference type="TCDB" id="2.A.47.2.3">
    <property type="family name" value="the divalent anion:na(+) symporter (dass) family"/>
</dbReference>
<dbReference type="GlyGen" id="P39535">
    <property type="glycosylation" value="3 sites, 1 O-linked glycan (3 sites)"/>
</dbReference>
<dbReference type="iPTMnet" id="P39535"/>
<dbReference type="PaxDb" id="4932-YJL198W"/>
<dbReference type="PeptideAtlas" id="P39535"/>
<dbReference type="EnsemblFungi" id="YJL198W_mRNA">
    <property type="protein sequence ID" value="YJL198W"/>
    <property type="gene ID" value="YJL198W"/>
</dbReference>
<dbReference type="GeneID" id="853241"/>
<dbReference type="KEGG" id="sce:YJL198W"/>
<dbReference type="AGR" id="SGD:S000003734"/>
<dbReference type="SGD" id="S000003734">
    <property type="gene designation" value="PHO90"/>
</dbReference>
<dbReference type="VEuPathDB" id="FungiDB:YJL198W"/>
<dbReference type="eggNOG" id="KOG1281">
    <property type="taxonomic scope" value="Eukaryota"/>
</dbReference>
<dbReference type="GeneTree" id="ENSGT01030000234550"/>
<dbReference type="HOGENOM" id="CLU_005170_8_0_1"/>
<dbReference type="InParanoid" id="P39535"/>
<dbReference type="OMA" id="DINNFPW"/>
<dbReference type="OrthoDB" id="10260443at2759"/>
<dbReference type="BioCyc" id="YEAST:G3O-31629-MONOMER"/>
<dbReference type="BRENDA" id="7.3.2.1">
    <property type="organism ID" value="984"/>
</dbReference>
<dbReference type="BioGRID-ORCS" id="853241">
    <property type="hits" value="2 hits in 10 CRISPR screens"/>
</dbReference>
<dbReference type="PRO" id="PR:P39535"/>
<dbReference type="Proteomes" id="UP000002311">
    <property type="component" value="Chromosome X"/>
</dbReference>
<dbReference type="RNAct" id="P39535">
    <property type="molecule type" value="protein"/>
</dbReference>
<dbReference type="GO" id="GO:0071944">
    <property type="term" value="C:cell periphery"/>
    <property type="evidence" value="ECO:0007005"/>
    <property type="project" value="SGD"/>
</dbReference>
<dbReference type="GO" id="GO:0005886">
    <property type="term" value="C:plasma membrane"/>
    <property type="evidence" value="ECO:0000314"/>
    <property type="project" value="SGD"/>
</dbReference>
<dbReference type="GO" id="GO:0005315">
    <property type="term" value="F:phosphate transmembrane transporter activity"/>
    <property type="evidence" value="ECO:0000315"/>
    <property type="project" value="SGD"/>
</dbReference>
<dbReference type="GO" id="GO:0006817">
    <property type="term" value="P:phosphate ion transport"/>
    <property type="evidence" value="ECO:0000316"/>
    <property type="project" value="SGD"/>
</dbReference>
<dbReference type="GO" id="GO:0006797">
    <property type="term" value="P:polyphosphate metabolic process"/>
    <property type="evidence" value="ECO:0000315"/>
    <property type="project" value="SGD"/>
</dbReference>
<dbReference type="GO" id="GO:2000185">
    <property type="term" value="P:regulation of phosphate transmembrane transport"/>
    <property type="evidence" value="ECO:0000316"/>
    <property type="project" value="SGD"/>
</dbReference>
<dbReference type="GO" id="GO:0055085">
    <property type="term" value="P:transmembrane transport"/>
    <property type="evidence" value="ECO:0000318"/>
    <property type="project" value="GO_Central"/>
</dbReference>
<dbReference type="CDD" id="cd01115">
    <property type="entry name" value="SLC13_permease"/>
    <property type="match status" value="1"/>
</dbReference>
<dbReference type="CDD" id="cd14478">
    <property type="entry name" value="SPX_PHO87_PHO90_like"/>
    <property type="match status" value="1"/>
</dbReference>
<dbReference type="InterPro" id="IPR004680">
    <property type="entry name" value="Cit_transptr-like_dom"/>
</dbReference>
<dbReference type="InterPro" id="IPR004331">
    <property type="entry name" value="SPX_dom"/>
</dbReference>
<dbReference type="PANTHER" id="PTHR10283:SF110">
    <property type="entry name" value="INORGANIC PHOSPHATE TRANSPORTER PHO87-RELATED"/>
    <property type="match status" value="1"/>
</dbReference>
<dbReference type="PANTHER" id="PTHR10283">
    <property type="entry name" value="SOLUTE CARRIER FAMILY 13 MEMBER"/>
    <property type="match status" value="1"/>
</dbReference>
<dbReference type="Pfam" id="PF03600">
    <property type="entry name" value="CitMHS"/>
    <property type="match status" value="1"/>
</dbReference>
<dbReference type="Pfam" id="PF03105">
    <property type="entry name" value="SPX"/>
    <property type="match status" value="2"/>
</dbReference>
<dbReference type="PROSITE" id="PS51382">
    <property type="entry name" value="SPX"/>
    <property type="match status" value="1"/>
</dbReference>
<gene>
    <name type="primary">PHO90</name>
    <name type="ordered locus">YJL198W</name>
    <name type="ORF">J0336</name>
</gene>
<proteinExistence type="evidence at protein level"/>
<comment type="function">
    <text evidence="3 6">Low-affinity phosphate transporter involved in the control of cellular phosphate levels.</text>
</comment>
<comment type="subcellular location">
    <subcellularLocation>
        <location evidence="7">Membrane</location>
        <topology evidence="7">Multi-pass membrane protein</topology>
    </subcellularLocation>
</comment>
<comment type="induction">
    <text evidence="4">Expression is constitutive and independent of inorganic phosphate concentration and PHO4 activity.</text>
</comment>
<comment type="miscellaneous">
    <text evidence="5">Present with 3430 molecules/cell in log phase SD medium.</text>
</comment>
<comment type="similarity">
    <text evidence="7">Belongs to the CitM (TC 2.A.11) transporter family.</text>
</comment>
<reference key="1">
    <citation type="journal article" date="1994" name="Yeast">
        <title>The sequence of a 36 kb segment on the left arm of yeast chromosome X identifies 24 open reading frames including NUC1, PRP21 (SPP91), CDC6, CRY2, the gene for S24, a homologue to the aconitase gene ACO1 and two homologues to chromosome III genes.</title>
        <authorList>
            <person name="Purnelle B."/>
            <person name="Coster F."/>
            <person name="Goffeau A."/>
        </authorList>
    </citation>
    <scope>NUCLEOTIDE SEQUENCE [GENOMIC DNA]</scope>
    <source>
        <strain>ATCC 204508 / S288c</strain>
    </source>
</reference>
<reference key="2">
    <citation type="journal article" date="1996" name="EMBO J.">
        <title>Complete nucleotide sequence of Saccharomyces cerevisiae chromosome X.</title>
        <authorList>
            <person name="Galibert F."/>
            <person name="Alexandraki D."/>
            <person name="Baur A."/>
            <person name="Boles E."/>
            <person name="Chalwatzis N."/>
            <person name="Chuat J.-C."/>
            <person name="Coster F."/>
            <person name="Cziepluch C."/>
            <person name="de Haan M."/>
            <person name="Domdey H."/>
            <person name="Durand P."/>
            <person name="Entian K.-D."/>
            <person name="Gatius M."/>
            <person name="Goffeau A."/>
            <person name="Grivell L.A."/>
            <person name="Hennemann A."/>
            <person name="Herbert C.J."/>
            <person name="Heumann K."/>
            <person name="Hilger F."/>
            <person name="Hollenberg C.P."/>
            <person name="Huang M.-E."/>
            <person name="Jacq C."/>
            <person name="Jauniaux J.-C."/>
            <person name="Katsoulou C."/>
            <person name="Kirchrath L."/>
            <person name="Kleine K."/>
            <person name="Kordes E."/>
            <person name="Koetter P."/>
            <person name="Liebl S."/>
            <person name="Louis E.J."/>
            <person name="Manus V."/>
            <person name="Mewes H.-W."/>
            <person name="Miosga T."/>
            <person name="Obermaier B."/>
            <person name="Perea J."/>
            <person name="Pohl T.M."/>
            <person name="Portetelle D."/>
            <person name="Pujol A."/>
            <person name="Purnelle B."/>
            <person name="Ramezani Rad M."/>
            <person name="Rasmussen S.W."/>
            <person name="Rose M."/>
            <person name="Rossau R."/>
            <person name="Schaaff-Gerstenschlaeger I."/>
            <person name="Smits P.H.M."/>
            <person name="Scarcez T."/>
            <person name="Soriano N."/>
            <person name="To Van D."/>
            <person name="Tzermia M."/>
            <person name="Van Broekhoven A."/>
            <person name="Vandenbol M."/>
            <person name="Wedler H."/>
            <person name="von Wettstein D."/>
            <person name="Wambutt R."/>
            <person name="Zagulski M."/>
            <person name="Zollner A."/>
            <person name="Karpfinger-Hartl L."/>
        </authorList>
    </citation>
    <scope>NUCLEOTIDE SEQUENCE [LARGE SCALE GENOMIC DNA]</scope>
    <source>
        <strain>ATCC 204508 / S288c</strain>
    </source>
</reference>
<reference key="3">
    <citation type="journal article" date="2014" name="G3 (Bethesda)">
        <title>The reference genome sequence of Saccharomyces cerevisiae: Then and now.</title>
        <authorList>
            <person name="Engel S.R."/>
            <person name="Dietrich F.S."/>
            <person name="Fisk D.G."/>
            <person name="Binkley G."/>
            <person name="Balakrishnan R."/>
            <person name="Costanzo M.C."/>
            <person name="Dwight S.S."/>
            <person name="Hitz B.C."/>
            <person name="Karra K."/>
            <person name="Nash R.S."/>
            <person name="Weng S."/>
            <person name="Wong E.D."/>
            <person name="Lloyd P."/>
            <person name="Skrzypek M.S."/>
            <person name="Miyasato S.R."/>
            <person name="Simison M."/>
            <person name="Cherry J.M."/>
        </authorList>
    </citation>
    <scope>GENOME REANNOTATION</scope>
    <source>
        <strain>ATCC 204508 / S288c</strain>
    </source>
</reference>
<reference key="4">
    <citation type="journal article" date="2001" name="Genetics">
        <title>Phosphate transport and sensing in Saccharomyces cerevisiae.</title>
        <authorList>
            <person name="Wykoff D.D."/>
            <person name="O'Shea E.K."/>
        </authorList>
    </citation>
    <scope>FUNCTION</scope>
</reference>
<reference key="5">
    <citation type="journal article" date="2003" name="Biochem. Biophys. Res. Commun.">
        <title>Transcriptional regulation of phosphate-responsive genes in low-affinity phosphate-transporter-defective mutants in Saccharomyces cerevisiae.</title>
        <authorList>
            <person name="Auesukaree C."/>
            <person name="Homma T."/>
            <person name="Kaneko Y."/>
            <person name="Harashima S."/>
        </authorList>
    </citation>
    <scope>INDUCTION</scope>
</reference>
<reference key="6">
    <citation type="journal article" date="2003" name="Nature">
        <title>Global analysis of protein expression in yeast.</title>
        <authorList>
            <person name="Ghaemmaghami S."/>
            <person name="Huh W.-K."/>
            <person name="Bower K."/>
            <person name="Howson R.W."/>
            <person name="Belle A."/>
            <person name="Dephoure N."/>
            <person name="O'Shea E.K."/>
            <person name="Weissman J.S."/>
        </authorList>
    </citation>
    <scope>LEVEL OF PROTEIN EXPRESSION [LARGE SCALE ANALYSIS]</scope>
</reference>
<reference key="7">
    <citation type="journal article" date="2010" name="Proc. Natl. Acad. Sci. U.S.A.">
        <title>Transport and signaling through the phosphate-binding site of the yeast Pho84 phosphate transceptor.</title>
        <authorList>
            <person name="Popova Y."/>
            <person name="Thayumanavan P."/>
            <person name="Lonati E."/>
            <person name="Agrochao M."/>
            <person name="Thevelein J.M."/>
        </authorList>
    </citation>
    <scope>FUNCTION</scope>
</reference>